<protein>
    <recommendedName>
        <fullName>Peroxynitrite isomerase</fullName>
        <ecNumber evidence="1">5.99.-.-</ecNumber>
    </recommendedName>
    <alternativeName>
        <fullName>Ferric nitrobindin</fullName>
        <shortName>Nb(III)</shortName>
    </alternativeName>
</protein>
<reference key="1">
    <citation type="journal article" date="2007" name="Proc. Natl. Acad. Sci. U.S.A.">
        <title>Genome sequencing reveals complex secondary metabolome in the marine actinomycete Salinispora tropica.</title>
        <authorList>
            <person name="Udwary D.W."/>
            <person name="Zeigler L."/>
            <person name="Asolkar R.N."/>
            <person name="Singan V."/>
            <person name="Lapidus A."/>
            <person name="Fenical W."/>
            <person name="Jensen P.R."/>
            <person name="Moore B.S."/>
        </authorList>
    </citation>
    <scope>NUCLEOTIDE SEQUENCE [LARGE SCALE GENOMIC DNA]</scope>
    <source>
        <strain>ATCC BAA-916 / DSM 44818 / JCM 13857 / NBRC 105044 / CNB-440</strain>
    </source>
</reference>
<comment type="function">
    <text evidence="1">Heme-binding protein able to scavenge peroxynitrite and to protect free L-tyrosine against peroxynitrite-mediated nitration, by acting as a peroxynitrite isomerase that converts peroxynitrite to nitrate. Therefore, this protein likely plays a role in peroxynitrite sensing and in the detoxification of reactive nitrogen and oxygen species (RNS and ROS, respectively). Is able to bind nitric oxide (NO) in vitro, but may act as a sensor of peroxynitrite levels in vivo.</text>
</comment>
<comment type="catalytic activity">
    <reaction evidence="1">
        <text>peroxynitrite = nitrate</text>
        <dbReference type="Rhea" id="RHEA:63116"/>
        <dbReference type="ChEBI" id="CHEBI:17632"/>
        <dbReference type="ChEBI" id="CHEBI:25941"/>
    </reaction>
    <physiologicalReaction direction="left-to-right" evidence="1">
        <dbReference type="Rhea" id="RHEA:63117"/>
    </physiologicalReaction>
</comment>
<comment type="cofactor">
    <cofactor evidence="1">
        <name>heme b</name>
        <dbReference type="ChEBI" id="CHEBI:60344"/>
    </cofactor>
    <text evidence="1">Binds 1 heme b group per subunit, that coordinates a highly solvent-exposed Fe(III) atom.</text>
</comment>
<comment type="pathway">
    <text evidence="1">Nitrogen metabolism.</text>
</comment>
<comment type="subunit">
    <text evidence="1">Homodimer.</text>
</comment>
<comment type="domain">
    <text evidence="1">Forms a 10-stranded antiparallel beta-barrel structure able to accommodate a hydrophobic ligand in its interior. In fact, this fold hosts the heme group, which is located in a wide surface cleft.</text>
</comment>
<comment type="similarity">
    <text evidence="1">Belongs to the nitrobindin family.</text>
</comment>
<name>NB_SALTO</name>
<keyword id="KW-0349">Heme</keyword>
<keyword id="KW-0408">Iron</keyword>
<keyword id="KW-0413">Isomerase</keyword>
<keyword id="KW-0479">Metal-binding</keyword>
<keyword id="KW-1185">Reference proteome</keyword>
<organism>
    <name type="scientific">Salinispora tropica (strain ATCC BAA-916 / DSM 44818 / JCM 13857 / NBRC 105044 / CNB-440)</name>
    <dbReference type="NCBI Taxonomy" id="369723"/>
    <lineage>
        <taxon>Bacteria</taxon>
        <taxon>Bacillati</taxon>
        <taxon>Actinomycetota</taxon>
        <taxon>Actinomycetes</taxon>
        <taxon>Micromonosporales</taxon>
        <taxon>Micromonosporaceae</taxon>
        <taxon>Salinispora</taxon>
    </lineage>
</organism>
<gene>
    <name type="ordered locus">Strop_0310</name>
</gene>
<accession>A4X1P5</accession>
<sequence>MSDENPLQPPWLNAPPVDSYPYEESHDLRTGPKLHPTLDGLLPYIGVWRGRGRGGYPTIEDFDFAQEIRISHDGRPFLCYESRAWLLDEQSRPIRPAGREMGWWRPVLDGDRATNEWEALMSTPTGVMELHLGKRTGTQLEFATDAVVRTPTAKEVTAGHRLFGIVEGALLYAQEMAAVGHGLTPHLSARLIRVGG</sequence>
<proteinExistence type="inferred from homology"/>
<dbReference type="EC" id="5.99.-.-" evidence="1"/>
<dbReference type="EMBL" id="CP000667">
    <property type="protein sequence ID" value="ABP52795.1"/>
    <property type="molecule type" value="Genomic_DNA"/>
</dbReference>
<dbReference type="RefSeq" id="WP_011904230.1">
    <property type="nucleotide sequence ID" value="NC_009380.1"/>
</dbReference>
<dbReference type="SMR" id="A4X1P5"/>
<dbReference type="STRING" id="369723.Strop_0310"/>
<dbReference type="KEGG" id="stp:Strop_0310"/>
<dbReference type="PATRIC" id="fig|369723.5.peg.319"/>
<dbReference type="eggNOG" id="COG4044">
    <property type="taxonomic scope" value="Bacteria"/>
</dbReference>
<dbReference type="HOGENOM" id="CLU_085483_0_0_11"/>
<dbReference type="Proteomes" id="UP000000235">
    <property type="component" value="Chromosome"/>
</dbReference>
<dbReference type="GO" id="GO:0020037">
    <property type="term" value="F:heme binding"/>
    <property type="evidence" value="ECO:0007669"/>
    <property type="project" value="UniProtKB-UniRule"/>
</dbReference>
<dbReference type="GO" id="GO:0046872">
    <property type="term" value="F:metal ion binding"/>
    <property type="evidence" value="ECO:0007669"/>
    <property type="project" value="UniProtKB-KW"/>
</dbReference>
<dbReference type="GO" id="GO:0062213">
    <property type="term" value="F:peroxynitrite isomerase activity"/>
    <property type="evidence" value="ECO:0007669"/>
    <property type="project" value="UniProtKB-UniRule"/>
</dbReference>
<dbReference type="CDD" id="cd07828">
    <property type="entry name" value="lipocalin_heme-bd-THAP4-like"/>
    <property type="match status" value="1"/>
</dbReference>
<dbReference type="Gene3D" id="2.40.128.20">
    <property type="match status" value="1"/>
</dbReference>
<dbReference type="HAMAP" id="MF_01297">
    <property type="entry name" value="nitrobindin"/>
    <property type="match status" value="1"/>
</dbReference>
<dbReference type="InterPro" id="IPR012674">
    <property type="entry name" value="Calycin"/>
</dbReference>
<dbReference type="InterPro" id="IPR022939">
    <property type="entry name" value="Nb(III)_bact/plant"/>
</dbReference>
<dbReference type="InterPro" id="IPR045165">
    <property type="entry name" value="Nitrobindin"/>
</dbReference>
<dbReference type="InterPro" id="IPR014878">
    <property type="entry name" value="THAP4-like_heme-bd"/>
</dbReference>
<dbReference type="PANTHER" id="PTHR15854:SF4">
    <property type="entry name" value="PEROXYNITRITE ISOMERASE THAP4"/>
    <property type="match status" value="1"/>
</dbReference>
<dbReference type="PANTHER" id="PTHR15854">
    <property type="entry name" value="THAP4 PROTEIN"/>
    <property type="match status" value="1"/>
</dbReference>
<dbReference type="Pfam" id="PF08768">
    <property type="entry name" value="THAP4_heme-bd"/>
    <property type="match status" value="1"/>
</dbReference>
<dbReference type="SUPFAM" id="SSF50814">
    <property type="entry name" value="Lipocalins"/>
    <property type="match status" value="1"/>
</dbReference>
<evidence type="ECO:0000255" key="1">
    <source>
        <dbReference type="HAMAP-Rule" id="MF_01297"/>
    </source>
</evidence>
<feature type="chain" id="PRO_0000356950" description="Peroxynitrite isomerase">
    <location>
        <begin position="1"/>
        <end position="196"/>
    </location>
</feature>
<feature type="short sequence motif" description="GXWXGXG" evidence="1">
    <location>
        <begin position="46"/>
        <end position="52"/>
    </location>
</feature>
<feature type="binding site" description="axial binding residue" evidence="1">
    <location>
        <position position="186"/>
    </location>
    <ligand>
        <name>heme b</name>
        <dbReference type="ChEBI" id="CHEBI:60344"/>
    </ligand>
    <ligandPart>
        <name>Fe</name>
        <dbReference type="ChEBI" id="CHEBI:18248"/>
    </ligandPart>
</feature>